<accession>A3DMU2</accession>
<evidence type="ECO:0000255" key="1">
    <source>
        <dbReference type="HAMAP-Rule" id="MF_00256"/>
    </source>
</evidence>
<evidence type="ECO:0000305" key="2"/>
<sequence length="220" mass="26395">MVKGMYHYIAQLWKRPYEGDMLTLMRQRLIKWRREPAIIRIEKPTRLDRARALGYKAKQGFIIVRVRVRKGGLRKQRPNKGRRPKRMGIYGFAPSKSLRLIAEERAARKYPNLEVLNSYYVGEDGNYKWYEVILVDPHHPAICNDPDIKWICEKQHRRRVFRGLTSAGKKMRGLRKSRGLKYTIKYKWKRKQKERLLKKRHEASRGAREPWQIVLKKAEE</sequence>
<keyword id="KW-1185">Reference proteome</keyword>
<keyword id="KW-0687">Ribonucleoprotein</keyword>
<keyword id="KW-0689">Ribosomal protein</keyword>
<name>RL15E_STAMF</name>
<comment type="similarity">
    <text evidence="1">Belongs to the eukaryotic ribosomal protein eL15 family.</text>
</comment>
<proteinExistence type="inferred from homology"/>
<dbReference type="EMBL" id="CP000575">
    <property type="protein sequence ID" value="ABN69952.1"/>
    <property type="molecule type" value="Genomic_DNA"/>
</dbReference>
<dbReference type="RefSeq" id="WP_011839143.1">
    <property type="nucleotide sequence ID" value="NC_009033.1"/>
</dbReference>
<dbReference type="SMR" id="A3DMU2"/>
<dbReference type="STRING" id="399550.Smar_0852"/>
<dbReference type="GeneID" id="4907824"/>
<dbReference type="KEGG" id="smr:Smar_0852"/>
<dbReference type="eggNOG" id="arCOG04209">
    <property type="taxonomic scope" value="Archaea"/>
</dbReference>
<dbReference type="HOGENOM" id="CLU_080796_1_0_2"/>
<dbReference type="OrthoDB" id="8183at2157"/>
<dbReference type="Proteomes" id="UP000000254">
    <property type="component" value="Chromosome"/>
</dbReference>
<dbReference type="GO" id="GO:0022625">
    <property type="term" value="C:cytosolic large ribosomal subunit"/>
    <property type="evidence" value="ECO:0007669"/>
    <property type="project" value="TreeGrafter"/>
</dbReference>
<dbReference type="GO" id="GO:0003723">
    <property type="term" value="F:RNA binding"/>
    <property type="evidence" value="ECO:0007669"/>
    <property type="project" value="TreeGrafter"/>
</dbReference>
<dbReference type="GO" id="GO:0003735">
    <property type="term" value="F:structural constituent of ribosome"/>
    <property type="evidence" value="ECO:0007669"/>
    <property type="project" value="InterPro"/>
</dbReference>
<dbReference type="GO" id="GO:0002181">
    <property type="term" value="P:cytoplasmic translation"/>
    <property type="evidence" value="ECO:0007669"/>
    <property type="project" value="TreeGrafter"/>
</dbReference>
<dbReference type="FunFam" id="3.40.1120.10:FF:000002">
    <property type="entry name" value="50S ribosomal protein L15e"/>
    <property type="match status" value="1"/>
</dbReference>
<dbReference type="Gene3D" id="3.40.1120.10">
    <property type="entry name" value="Ribosomal protein l15e"/>
    <property type="match status" value="1"/>
</dbReference>
<dbReference type="HAMAP" id="MF_00256">
    <property type="entry name" value="Ribosomal_eL15"/>
    <property type="match status" value="1"/>
</dbReference>
<dbReference type="InterPro" id="IPR024794">
    <property type="entry name" value="Rbsml_eL15_core_dom_sf"/>
</dbReference>
<dbReference type="InterPro" id="IPR000439">
    <property type="entry name" value="Ribosomal_eL15"/>
</dbReference>
<dbReference type="InterPro" id="IPR020926">
    <property type="entry name" value="Ribosomal_eL15_arc"/>
</dbReference>
<dbReference type="InterPro" id="IPR020925">
    <property type="entry name" value="Ribosomal_eL15_CS"/>
</dbReference>
<dbReference type="InterPro" id="IPR012678">
    <property type="entry name" value="Ribosomal_uL23/eL15/eS24_sf"/>
</dbReference>
<dbReference type="NCBIfam" id="NF003269">
    <property type="entry name" value="PRK04243.1"/>
    <property type="match status" value="1"/>
</dbReference>
<dbReference type="PANTHER" id="PTHR11847:SF4">
    <property type="entry name" value="LARGE RIBOSOMAL SUBUNIT PROTEIN EL15"/>
    <property type="match status" value="1"/>
</dbReference>
<dbReference type="PANTHER" id="PTHR11847">
    <property type="entry name" value="RIBOSOMAL PROTEIN L15"/>
    <property type="match status" value="1"/>
</dbReference>
<dbReference type="Pfam" id="PF00827">
    <property type="entry name" value="Ribosomal_L15e"/>
    <property type="match status" value="1"/>
</dbReference>
<dbReference type="SMART" id="SM01384">
    <property type="entry name" value="Ribosomal_L15e"/>
    <property type="match status" value="1"/>
</dbReference>
<dbReference type="SUPFAM" id="SSF54189">
    <property type="entry name" value="Ribosomal proteins S24e, L23 and L15e"/>
    <property type="match status" value="1"/>
</dbReference>
<dbReference type="PROSITE" id="PS01194">
    <property type="entry name" value="RIBOSOMAL_L15E"/>
    <property type="match status" value="1"/>
</dbReference>
<protein>
    <recommendedName>
        <fullName evidence="1">Large ribosomal subunit protein eL15</fullName>
    </recommendedName>
    <alternativeName>
        <fullName evidence="2">50S ribosomal protein L15e</fullName>
    </alternativeName>
</protein>
<gene>
    <name evidence="1" type="primary">rpl15e</name>
    <name type="ordered locus">Smar_0852</name>
</gene>
<organism>
    <name type="scientific">Staphylothermus marinus (strain ATCC 43588 / DSM 3639 / JCM 9404 / F1)</name>
    <dbReference type="NCBI Taxonomy" id="399550"/>
    <lineage>
        <taxon>Archaea</taxon>
        <taxon>Thermoproteota</taxon>
        <taxon>Thermoprotei</taxon>
        <taxon>Desulfurococcales</taxon>
        <taxon>Desulfurococcaceae</taxon>
        <taxon>Staphylothermus</taxon>
    </lineage>
</organism>
<reference key="1">
    <citation type="journal article" date="2009" name="BMC Genomics">
        <title>The complete genome sequence of Staphylothermus marinus reveals differences in sulfur metabolism among heterotrophic Crenarchaeota.</title>
        <authorList>
            <person name="Anderson I.J."/>
            <person name="Dharmarajan L."/>
            <person name="Rodriguez J."/>
            <person name="Hooper S."/>
            <person name="Porat I."/>
            <person name="Ulrich L.E."/>
            <person name="Elkins J.G."/>
            <person name="Mavromatis K."/>
            <person name="Sun H."/>
            <person name="Land M."/>
            <person name="Lapidus A."/>
            <person name="Lucas S."/>
            <person name="Barry K."/>
            <person name="Huber H."/>
            <person name="Zhulin I.B."/>
            <person name="Whitman W.B."/>
            <person name="Mukhopadhyay B."/>
            <person name="Woese C."/>
            <person name="Bristow J."/>
            <person name="Kyrpides N."/>
        </authorList>
    </citation>
    <scope>NUCLEOTIDE SEQUENCE [LARGE SCALE GENOMIC DNA]</scope>
    <source>
        <strain>ATCC 43588 / DSM 3639 / JCM 9404 / F1</strain>
    </source>
</reference>
<reference key="2">
    <citation type="journal article" date="2009" name="Stand. Genomic Sci.">
        <title>Complete genome sequence of Staphylothermus marinus Stetter and Fiala 1986 type strain F1.</title>
        <authorList>
            <person name="Anderson I.J."/>
            <person name="Sun H."/>
            <person name="Lapidus A."/>
            <person name="Copeland A."/>
            <person name="Glavina Del Rio T."/>
            <person name="Tice H."/>
            <person name="Dalin E."/>
            <person name="Lucas S."/>
            <person name="Barry K."/>
            <person name="Land M."/>
            <person name="Richardson P."/>
            <person name="Huber H."/>
            <person name="Kyrpides N.C."/>
        </authorList>
    </citation>
    <scope>NUCLEOTIDE SEQUENCE [LARGE SCALE GENOMIC DNA]</scope>
    <source>
        <strain>ATCC 43588 / DSM 3639 / JCM 9404 / F1</strain>
    </source>
</reference>
<feature type="chain" id="PRO_0000304209" description="Large ribosomal subunit protein eL15">
    <location>
        <begin position="1"/>
        <end position="220"/>
    </location>
</feature>